<comment type="function">
    <text evidence="1">Component of the cytochrome c oxidase, the last enzyme in the mitochondrial electron transport chain which drives oxidative phosphorylation. The respiratory chain contains 3 multisubunit complexes succinate dehydrogenase (complex II, CII), ubiquinol-cytochrome c oxidoreductase (cytochrome b-c1 complex, complex III, CIII) and cytochrome c oxidase (complex IV, CIV), that cooperate to transfer electrons derived from NADH and succinate to molecular oxygen, creating an electrochemical gradient over the inner membrane that drives transmembrane transport and the ATP synthase. Cytochrome c oxidase is the component of the respiratory chain that catalyzes the reduction of oxygen to water. Electrons originating from reduced cytochrome c in the intermembrane space (IMS) are transferred via the dinuclear copper A center (CU(A)) of subunit 2 and heme A of subunit 1 to the active site in subunit 1, a binuclear center (BNC) formed by heme A3 and copper B (CU(B)). The BNC reduces molecular oxygen to 2 water molecules using 4 electrons from cytochrome c in the IMS and 4 protons from the mitochondrial matrix.</text>
</comment>
<comment type="catalytic activity">
    <reaction evidence="1">
        <text>4 Fe(II)-[cytochrome c] + O2 + 8 H(+)(in) = 4 Fe(III)-[cytochrome c] + 2 H2O + 4 H(+)(out)</text>
        <dbReference type="Rhea" id="RHEA:11436"/>
        <dbReference type="Rhea" id="RHEA-COMP:10350"/>
        <dbReference type="Rhea" id="RHEA-COMP:14399"/>
        <dbReference type="ChEBI" id="CHEBI:15377"/>
        <dbReference type="ChEBI" id="CHEBI:15378"/>
        <dbReference type="ChEBI" id="CHEBI:15379"/>
        <dbReference type="ChEBI" id="CHEBI:29033"/>
        <dbReference type="ChEBI" id="CHEBI:29034"/>
        <dbReference type="EC" id="7.1.1.9"/>
    </reaction>
    <physiologicalReaction direction="left-to-right" evidence="1">
        <dbReference type="Rhea" id="RHEA:11437"/>
    </physiologicalReaction>
</comment>
<comment type="cofactor">
    <cofactor evidence="1">
        <name>Cu cation</name>
        <dbReference type="ChEBI" id="CHEBI:23378"/>
    </cofactor>
    <text evidence="1">Binds a dinuclear copper A center per subunit.</text>
</comment>
<comment type="subunit">
    <text evidence="1">Component of the cytochrome c oxidase (complex IV, CIV), a multisubunit enzyme composed of a catalytic core of 3 subunits and several supernumerary subunits. The complex exists as a monomer or a dimer and forms supercomplexes (SCs) in the inner mitochondrial membrane with ubiquinol-cytochrome c oxidoreductase (cytochrome b-c1 complex, complex III, CIII).</text>
</comment>
<comment type="subcellular location">
    <subcellularLocation>
        <location evidence="1">Mitochondrion inner membrane</location>
        <topology evidence="1">Multi-pass membrane protein</topology>
    </subcellularLocation>
</comment>
<comment type="RNA editing">
    <location>
        <position position="26" evidence="3 4"/>
    </location>
    <location>
        <position position="56" evidence="3 4"/>
    </location>
    <location>
        <position position="57" evidence="3 4"/>
    </location>
    <location>
        <position position="87" evidence="3 4"/>
    </location>
    <location>
        <position position="129" evidence="3 4"/>
    </location>
    <location>
        <position position="130" evidence="3 4"/>
    </location>
    <location>
        <position position="188" evidence="3 4"/>
    </location>
    <location>
        <position position="196" evidence="3 4"/>
    </location>
    <location>
        <position position="207" evidence="3 4"/>
    </location>
    <location>
        <position position="213" evidence="3 4"/>
    </location>
    <location>
        <position position="228" evidence="3 4"/>
    </location>
    <location>
        <position position="235" evidence="3 4"/>
    </location>
</comment>
<comment type="similarity">
    <text evidence="5">Belongs to the cytochrome c oxidase subunit 2 family.</text>
</comment>
<geneLocation type="mitochondrion"/>
<sequence length="260" mass="29515">MILRSLSCRFLTIALCDAAEPWQLGFQDAATPMMQGIIDLHHDIFFFLILILVFVLWMLVRALWHFNEQTNPIPQRIVHGTTIEIIWTIFPSVILLFIAIPSFALLYSMDGVLVDPAITIKAIGHQWYWTYEYSDYNSSDEQSLTFDSYTIPEDDPELGQSRLLEVDNRVVVPAKTHLRMIVTPADVLHSWAVPSLGVKCDAVPGRLNLTSILVQREGVYYGQCSEICGTNHAFMPIVVEAVTLKDYADWVSNQLILQTN</sequence>
<feature type="chain" id="PRO_0000183714" description="Cytochrome c oxidase subunit 2">
    <location>
        <begin position="1"/>
        <end position="260"/>
    </location>
</feature>
<feature type="topological domain" description="Mitochondrial intermembrane" evidence="2">
    <location>
        <begin position="1"/>
        <end position="43"/>
    </location>
</feature>
<feature type="transmembrane region" description="Helical" evidence="2">
    <location>
        <begin position="44"/>
        <end position="64"/>
    </location>
</feature>
<feature type="topological domain" description="Mitochondrial matrix" evidence="2">
    <location>
        <begin position="65"/>
        <end position="84"/>
    </location>
</feature>
<feature type="transmembrane region" description="Helical" evidence="2">
    <location>
        <begin position="85"/>
        <end position="105"/>
    </location>
</feature>
<feature type="topological domain" description="Mitochondrial intermembrane" evidence="2">
    <location>
        <begin position="106"/>
        <end position="260"/>
    </location>
</feature>
<feature type="binding site" evidence="1">
    <location>
        <position position="189"/>
    </location>
    <ligand>
        <name>Cu cation</name>
        <dbReference type="ChEBI" id="CHEBI:23378"/>
        <label>A1</label>
    </ligand>
</feature>
<feature type="binding site" evidence="1">
    <location>
        <position position="224"/>
    </location>
    <ligand>
        <name>Cu cation</name>
        <dbReference type="ChEBI" id="CHEBI:23378"/>
        <label>A1</label>
    </ligand>
</feature>
<feature type="binding site" evidence="1">
    <location>
        <position position="224"/>
    </location>
    <ligand>
        <name>Cu cation</name>
        <dbReference type="ChEBI" id="CHEBI:23378"/>
        <label>A2</label>
    </ligand>
</feature>
<feature type="binding site" evidence="1">
    <location>
        <position position="226"/>
    </location>
    <ligand>
        <name>Cu cation</name>
        <dbReference type="ChEBI" id="CHEBI:23378"/>
        <label>A2</label>
    </ligand>
</feature>
<feature type="binding site" evidence="1">
    <location>
        <position position="226"/>
    </location>
    <ligand>
        <name>Mg(2+)</name>
        <dbReference type="ChEBI" id="CHEBI:18420"/>
        <note>ligand shared with subunit 1</note>
    </ligand>
</feature>
<feature type="binding site" evidence="1">
    <location>
        <position position="228"/>
    </location>
    <ligand>
        <name>Cu cation</name>
        <dbReference type="ChEBI" id="CHEBI:23378"/>
        <label>A1</label>
    </ligand>
</feature>
<feature type="binding site" evidence="1">
    <location>
        <position position="228"/>
    </location>
    <ligand>
        <name>Cu cation</name>
        <dbReference type="ChEBI" id="CHEBI:23378"/>
        <label>A2</label>
    </ligand>
</feature>
<feature type="binding site" evidence="1">
    <location>
        <position position="232"/>
    </location>
    <ligand>
        <name>Cu cation</name>
        <dbReference type="ChEBI" id="CHEBI:23378"/>
        <label>A2</label>
    </ligand>
</feature>
<feature type="binding site" evidence="1">
    <location>
        <position position="235"/>
    </location>
    <ligand>
        <name>Cu cation</name>
        <dbReference type="ChEBI" id="CHEBI:23378"/>
        <label>A1</label>
    </ligand>
</feature>
<protein>
    <recommendedName>
        <fullName>Cytochrome c oxidase subunit 2</fullName>
        <ecNumber>7.1.1.9</ecNumber>
    </recommendedName>
    <alternativeName>
        <fullName>Cytochrome c oxidase polypeptide II</fullName>
    </alternativeName>
</protein>
<dbReference type="EC" id="7.1.1.9"/>
<dbReference type="EMBL" id="X01108">
    <property type="protein sequence ID" value="CAA25581.1"/>
    <property type="status" value="ALT_SEQ"/>
    <property type="molecule type" value="Genomic_DNA"/>
</dbReference>
<dbReference type="PIR" id="A00481">
    <property type="entry name" value="OBWT2"/>
</dbReference>
<dbReference type="RefSeq" id="YP_398417.1">
    <property type="nucleotide sequence ID" value="NC_007579.1"/>
</dbReference>
<dbReference type="SMR" id="P00413"/>
<dbReference type="PaxDb" id="4565-EPlTAEP00000010097"/>
<dbReference type="eggNOG" id="KOG4767">
    <property type="taxonomic scope" value="Eukaryota"/>
</dbReference>
<dbReference type="Proteomes" id="UP000019116">
    <property type="component" value="Unplaced"/>
</dbReference>
<dbReference type="GO" id="GO:0005743">
    <property type="term" value="C:mitochondrial inner membrane"/>
    <property type="evidence" value="ECO:0007669"/>
    <property type="project" value="UniProtKB-SubCell"/>
</dbReference>
<dbReference type="GO" id="GO:0005507">
    <property type="term" value="F:copper ion binding"/>
    <property type="evidence" value="ECO:0007669"/>
    <property type="project" value="InterPro"/>
</dbReference>
<dbReference type="GO" id="GO:0004129">
    <property type="term" value="F:cytochrome-c oxidase activity"/>
    <property type="evidence" value="ECO:0007669"/>
    <property type="project" value="UniProtKB-EC"/>
</dbReference>
<dbReference type="GO" id="GO:0022900">
    <property type="term" value="P:electron transport chain"/>
    <property type="evidence" value="ECO:0007669"/>
    <property type="project" value="InterPro"/>
</dbReference>
<dbReference type="CDD" id="cd13912">
    <property type="entry name" value="CcO_II_C"/>
    <property type="match status" value="1"/>
</dbReference>
<dbReference type="FunFam" id="1.10.287.90:FF:000004">
    <property type="entry name" value="Cytochrome c oxidase subunit 2"/>
    <property type="match status" value="1"/>
</dbReference>
<dbReference type="FunFam" id="2.60.40.420:FF:000001">
    <property type="entry name" value="Cytochrome c oxidase subunit 2"/>
    <property type="match status" value="1"/>
</dbReference>
<dbReference type="Gene3D" id="1.10.287.90">
    <property type="match status" value="1"/>
</dbReference>
<dbReference type="Gene3D" id="2.60.40.420">
    <property type="entry name" value="Cupredoxins - blue copper proteins"/>
    <property type="match status" value="1"/>
</dbReference>
<dbReference type="InterPro" id="IPR045187">
    <property type="entry name" value="CcO_II"/>
</dbReference>
<dbReference type="InterPro" id="IPR002429">
    <property type="entry name" value="CcO_II-like_C"/>
</dbReference>
<dbReference type="InterPro" id="IPR034210">
    <property type="entry name" value="CcO_II_C"/>
</dbReference>
<dbReference type="InterPro" id="IPR001505">
    <property type="entry name" value="Copper_CuA"/>
</dbReference>
<dbReference type="InterPro" id="IPR008972">
    <property type="entry name" value="Cupredoxin"/>
</dbReference>
<dbReference type="InterPro" id="IPR014222">
    <property type="entry name" value="Cyt_c_oxidase_su2"/>
</dbReference>
<dbReference type="InterPro" id="IPR011759">
    <property type="entry name" value="Cyt_c_oxidase_su2_TM_dom"/>
</dbReference>
<dbReference type="InterPro" id="IPR036257">
    <property type="entry name" value="Cyt_c_oxidase_su2_TM_sf"/>
</dbReference>
<dbReference type="NCBIfam" id="TIGR02866">
    <property type="entry name" value="CoxB"/>
    <property type="match status" value="1"/>
</dbReference>
<dbReference type="PANTHER" id="PTHR22888:SF9">
    <property type="entry name" value="CYTOCHROME C OXIDASE SUBUNIT 2"/>
    <property type="match status" value="1"/>
</dbReference>
<dbReference type="PANTHER" id="PTHR22888">
    <property type="entry name" value="CYTOCHROME C OXIDASE, SUBUNIT II"/>
    <property type="match status" value="1"/>
</dbReference>
<dbReference type="Pfam" id="PF00116">
    <property type="entry name" value="COX2"/>
    <property type="match status" value="1"/>
</dbReference>
<dbReference type="Pfam" id="PF02790">
    <property type="entry name" value="COX2_TM"/>
    <property type="match status" value="1"/>
</dbReference>
<dbReference type="PRINTS" id="PR01166">
    <property type="entry name" value="CYCOXIDASEII"/>
</dbReference>
<dbReference type="SUPFAM" id="SSF49503">
    <property type="entry name" value="Cupredoxins"/>
    <property type="match status" value="1"/>
</dbReference>
<dbReference type="SUPFAM" id="SSF81464">
    <property type="entry name" value="Cytochrome c oxidase subunit II-like, transmembrane region"/>
    <property type="match status" value="1"/>
</dbReference>
<dbReference type="PROSITE" id="PS00078">
    <property type="entry name" value="COX2"/>
    <property type="match status" value="1"/>
</dbReference>
<dbReference type="PROSITE" id="PS50857">
    <property type="entry name" value="COX2_CUA"/>
    <property type="match status" value="1"/>
</dbReference>
<dbReference type="PROSITE" id="PS50999">
    <property type="entry name" value="COX2_TM"/>
    <property type="match status" value="1"/>
</dbReference>
<proteinExistence type="evidence at transcript level"/>
<name>COX2_WHEAT</name>
<evidence type="ECO:0000250" key="1">
    <source>
        <dbReference type="UniProtKB" id="P00410"/>
    </source>
</evidence>
<evidence type="ECO:0000255" key="2"/>
<evidence type="ECO:0000269" key="3">
    <source>
    </source>
</evidence>
<evidence type="ECO:0000269" key="4">
    <source>
    </source>
</evidence>
<evidence type="ECO:0000305" key="5"/>
<accession>P00413</accession>
<keyword id="KW-0186">Copper</keyword>
<keyword id="KW-0249">Electron transport</keyword>
<keyword id="KW-0460">Magnesium</keyword>
<keyword id="KW-0472">Membrane</keyword>
<keyword id="KW-0479">Metal-binding</keyword>
<keyword id="KW-0496">Mitochondrion</keyword>
<keyword id="KW-0999">Mitochondrion inner membrane</keyword>
<keyword id="KW-1185">Reference proteome</keyword>
<keyword id="KW-0679">Respiratory chain</keyword>
<keyword id="KW-0691">RNA editing</keyword>
<keyword id="KW-1278">Translocase</keyword>
<keyword id="KW-0812">Transmembrane</keyword>
<keyword id="KW-1133">Transmembrane helix</keyword>
<keyword id="KW-0813">Transport</keyword>
<gene>
    <name type="primary">COX2</name>
    <name type="synonym">COII</name>
    <name type="synonym">COXII</name>
</gene>
<organism>
    <name type="scientific">Triticum aestivum</name>
    <name type="common">Wheat</name>
    <dbReference type="NCBI Taxonomy" id="4565"/>
    <lineage>
        <taxon>Eukaryota</taxon>
        <taxon>Viridiplantae</taxon>
        <taxon>Streptophyta</taxon>
        <taxon>Embryophyta</taxon>
        <taxon>Tracheophyta</taxon>
        <taxon>Spermatophyta</taxon>
        <taxon>Magnoliopsida</taxon>
        <taxon>Liliopsida</taxon>
        <taxon>Poales</taxon>
        <taxon>Poaceae</taxon>
        <taxon>BOP clade</taxon>
        <taxon>Pooideae</taxon>
        <taxon>Triticodae</taxon>
        <taxon>Triticeae</taxon>
        <taxon>Triticinae</taxon>
        <taxon>Triticum</taxon>
    </lineage>
</organism>
<reference key="1">
    <citation type="journal article" date="1984" name="EMBO J.">
        <title>The wheat cytochrome oxidase subunit II gene has an intron insert and three radical amino acid changes relative to maize.</title>
        <authorList>
            <person name="Bonen L."/>
            <person name="Boer P.H."/>
            <person name="Gray M.W."/>
        </authorList>
    </citation>
    <scope>NUCLEOTIDE SEQUENCE [GENOMIC DNA]</scope>
</reference>
<reference key="2">
    <citation type="journal article" date="1989" name="Nature">
        <title>RNA editing in wheat mitochondria results in the conservation of protein sequences.</title>
        <authorList>
            <person name="Gualberto J.M."/>
            <person name="Lamattina L."/>
            <person name="Bonnard G."/>
            <person name="Weil J.-H."/>
            <person name="Grienenberger J.-M."/>
        </authorList>
    </citation>
    <scope>RNA EDITING</scope>
</reference>
<reference key="3">
    <citation type="journal article" date="1989" name="Nature">
        <title>RNA editing in plant mitochondria.</title>
        <authorList>
            <person name="Covello P.S."/>
            <person name="Gray M.W."/>
        </authorList>
    </citation>
    <scope>RNA EDITING</scope>
</reference>